<sequence length="117" mass="13347">MNNAIMDMVDKANQKENAPQFDIGDTVDVHSKILEGNKERIQVFTGVVIGRSGKGAQEMFTVRRIVAGEGVERKFPVHSPRIEKVEVKRSGVTRRAKLYFLRDRVGKAVRLKERRRV</sequence>
<keyword id="KW-1185">Reference proteome</keyword>
<keyword id="KW-0687">Ribonucleoprotein</keyword>
<keyword id="KW-0689">Ribosomal protein</keyword>
<gene>
    <name evidence="1" type="primary">rplS</name>
    <name type="ordered locus">RB12821</name>
</gene>
<dbReference type="EMBL" id="BX294155">
    <property type="protein sequence ID" value="CAD77801.1"/>
    <property type="molecule type" value="Genomic_DNA"/>
</dbReference>
<dbReference type="RefSeq" id="NP_870724.1">
    <property type="nucleotide sequence ID" value="NC_005027.1"/>
</dbReference>
<dbReference type="RefSeq" id="WP_007329361.1">
    <property type="nucleotide sequence ID" value="NC_005027.1"/>
</dbReference>
<dbReference type="SMR" id="Q7UI13"/>
<dbReference type="FunCoup" id="Q7UI13">
    <property type="interactions" value="618"/>
</dbReference>
<dbReference type="STRING" id="243090.RB12821"/>
<dbReference type="EnsemblBacteria" id="CAD77801">
    <property type="protein sequence ID" value="CAD77801"/>
    <property type="gene ID" value="RB12821"/>
</dbReference>
<dbReference type="KEGG" id="rba:RB12821"/>
<dbReference type="PATRIC" id="fig|243090.15.peg.6210"/>
<dbReference type="eggNOG" id="COG0335">
    <property type="taxonomic scope" value="Bacteria"/>
</dbReference>
<dbReference type="HOGENOM" id="CLU_103507_2_1_0"/>
<dbReference type="InParanoid" id="Q7UI13"/>
<dbReference type="OrthoDB" id="9803541at2"/>
<dbReference type="Proteomes" id="UP000001025">
    <property type="component" value="Chromosome"/>
</dbReference>
<dbReference type="GO" id="GO:0022625">
    <property type="term" value="C:cytosolic large ribosomal subunit"/>
    <property type="evidence" value="ECO:0000318"/>
    <property type="project" value="GO_Central"/>
</dbReference>
<dbReference type="GO" id="GO:0003735">
    <property type="term" value="F:structural constituent of ribosome"/>
    <property type="evidence" value="ECO:0000318"/>
    <property type="project" value="GO_Central"/>
</dbReference>
<dbReference type="GO" id="GO:0006412">
    <property type="term" value="P:translation"/>
    <property type="evidence" value="ECO:0007669"/>
    <property type="project" value="UniProtKB-UniRule"/>
</dbReference>
<dbReference type="FunFam" id="2.30.30.790:FF:000001">
    <property type="entry name" value="50S ribosomal protein L19"/>
    <property type="match status" value="1"/>
</dbReference>
<dbReference type="Gene3D" id="2.30.30.790">
    <property type="match status" value="1"/>
</dbReference>
<dbReference type="HAMAP" id="MF_00402">
    <property type="entry name" value="Ribosomal_bL19"/>
    <property type="match status" value="1"/>
</dbReference>
<dbReference type="InterPro" id="IPR001857">
    <property type="entry name" value="Ribosomal_bL19"/>
</dbReference>
<dbReference type="InterPro" id="IPR018257">
    <property type="entry name" value="Ribosomal_bL19_CS"/>
</dbReference>
<dbReference type="InterPro" id="IPR038657">
    <property type="entry name" value="Ribosomal_bL19_sf"/>
</dbReference>
<dbReference type="InterPro" id="IPR008991">
    <property type="entry name" value="Translation_prot_SH3-like_sf"/>
</dbReference>
<dbReference type="NCBIfam" id="TIGR01024">
    <property type="entry name" value="rplS_bact"/>
    <property type="match status" value="1"/>
</dbReference>
<dbReference type="PANTHER" id="PTHR15680:SF9">
    <property type="entry name" value="LARGE RIBOSOMAL SUBUNIT PROTEIN BL19M"/>
    <property type="match status" value="1"/>
</dbReference>
<dbReference type="PANTHER" id="PTHR15680">
    <property type="entry name" value="RIBOSOMAL PROTEIN L19"/>
    <property type="match status" value="1"/>
</dbReference>
<dbReference type="Pfam" id="PF01245">
    <property type="entry name" value="Ribosomal_L19"/>
    <property type="match status" value="1"/>
</dbReference>
<dbReference type="PIRSF" id="PIRSF002191">
    <property type="entry name" value="Ribosomal_L19"/>
    <property type="match status" value="1"/>
</dbReference>
<dbReference type="PRINTS" id="PR00061">
    <property type="entry name" value="RIBOSOMALL19"/>
</dbReference>
<dbReference type="SUPFAM" id="SSF50104">
    <property type="entry name" value="Translation proteins SH3-like domain"/>
    <property type="match status" value="1"/>
</dbReference>
<dbReference type="PROSITE" id="PS01015">
    <property type="entry name" value="RIBOSOMAL_L19"/>
    <property type="match status" value="1"/>
</dbReference>
<comment type="function">
    <text evidence="1">This protein is located at the 30S-50S ribosomal subunit interface and may play a role in the structure and function of the aminoacyl-tRNA binding site.</text>
</comment>
<comment type="similarity">
    <text evidence="1">Belongs to the bacterial ribosomal protein bL19 family.</text>
</comment>
<proteinExistence type="inferred from homology"/>
<reference key="1">
    <citation type="journal article" date="2003" name="Proc. Natl. Acad. Sci. U.S.A.">
        <title>Complete genome sequence of the marine planctomycete Pirellula sp. strain 1.</title>
        <authorList>
            <person name="Gloeckner F.O."/>
            <person name="Kube M."/>
            <person name="Bauer M."/>
            <person name="Teeling H."/>
            <person name="Lombardot T."/>
            <person name="Ludwig W."/>
            <person name="Gade D."/>
            <person name="Beck A."/>
            <person name="Borzym K."/>
            <person name="Heitmann K."/>
            <person name="Rabus R."/>
            <person name="Schlesner H."/>
            <person name="Amann R."/>
            <person name="Reinhardt R."/>
        </authorList>
    </citation>
    <scope>NUCLEOTIDE SEQUENCE [LARGE SCALE GENOMIC DNA]</scope>
    <source>
        <strain>DSM 10527 / NCIMB 13988 / SH1</strain>
    </source>
</reference>
<accession>Q7UI13</accession>
<feature type="chain" id="PRO_0000163516" description="Large ribosomal subunit protein bL19">
    <location>
        <begin position="1"/>
        <end position="117"/>
    </location>
</feature>
<protein>
    <recommendedName>
        <fullName evidence="1">Large ribosomal subunit protein bL19</fullName>
    </recommendedName>
    <alternativeName>
        <fullName evidence="2">50S ribosomal protein L19</fullName>
    </alternativeName>
</protein>
<evidence type="ECO:0000255" key="1">
    <source>
        <dbReference type="HAMAP-Rule" id="MF_00402"/>
    </source>
</evidence>
<evidence type="ECO:0000305" key="2"/>
<organism>
    <name type="scientific">Rhodopirellula baltica (strain DSM 10527 / NCIMB 13988 / SH1)</name>
    <dbReference type="NCBI Taxonomy" id="243090"/>
    <lineage>
        <taxon>Bacteria</taxon>
        <taxon>Pseudomonadati</taxon>
        <taxon>Planctomycetota</taxon>
        <taxon>Planctomycetia</taxon>
        <taxon>Pirellulales</taxon>
        <taxon>Pirellulaceae</taxon>
        <taxon>Rhodopirellula</taxon>
    </lineage>
</organism>
<name>RL19_RHOBA</name>